<accession>C1C8S3</accession>
<gene>
    <name evidence="1" type="primary">nanE</name>
    <name type="ordered locus">SP70585_1724</name>
</gene>
<proteinExistence type="inferred from homology"/>
<keyword id="KW-0119">Carbohydrate metabolism</keyword>
<keyword id="KW-0413">Isomerase</keyword>
<dbReference type="EC" id="5.1.3.9" evidence="1"/>
<dbReference type="EMBL" id="CP000918">
    <property type="protein sequence ID" value="ACO16757.1"/>
    <property type="molecule type" value="Genomic_DNA"/>
</dbReference>
<dbReference type="RefSeq" id="WP_001135651.1">
    <property type="nucleotide sequence ID" value="NC_012468.1"/>
</dbReference>
<dbReference type="SMR" id="C1C8S3"/>
<dbReference type="KEGG" id="snm:SP70585_1724"/>
<dbReference type="HOGENOM" id="CLU_086300_1_0_9"/>
<dbReference type="UniPathway" id="UPA00629">
    <property type="reaction ID" value="UER00682"/>
</dbReference>
<dbReference type="Proteomes" id="UP000002211">
    <property type="component" value="Chromosome"/>
</dbReference>
<dbReference type="GO" id="GO:0005829">
    <property type="term" value="C:cytosol"/>
    <property type="evidence" value="ECO:0007669"/>
    <property type="project" value="TreeGrafter"/>
</dbReference>
<dbReference type="GO" id="GO:0047465">
    <property type="term" value="F:N-acylglucosamine-6-phosphate 2-epimerase activity"/>
    <property type="evidence" value="ECO:0007669"/>
    <property type="project" value="UniProtKB-EC"/>
</dbReference>
<dbReference type="GO" id="GO:0005975">
    <property type="term" value="P:carbohydrate metabolic process"/>
    <property type="evidence" value="ECO:0007669"/>
    <property type="project" value="UniProtKB-UniRule"/>
</dbReference>
<dbReference type="GO" id="GO:0006053">
    <property type="term" value="P:N-acetylmannosamine catabolic process"/>
    <property type="evidence" value="ECO:0007669"/>
    <property type="project" value="TreeGrafter"/>
</dbReference>
<dbReference type="GO" id="GO:0019262">
    <property type="term" value="P:N-acetylneuraminate catabolic process"/>
    <property type="evidence" value="ECO:0007669"/>
    <property type="project" value="UniProtKB-UniRule"/>
</dbReference>
<dbReference type="CDD" id="cd04729">
    <property type="entry name" value="NanE"/>
    <property type="match status" value="1"/>
</dbReference>
<dbReference type="FunFam" id="3.20.20.70:FF:000035">
    <property type="entry name" value="Putative N-acetylmannosamine-6-phosphate 2-epimerase"/>
    <property type="match status" value="1"/>
</dbReference>
<dbReference type="Gene3D" id="3.20.20.70">
    <property type="entry name" value="Aldolase class I"/>
    <property type="match status" value="1"/>
</dbReference>
<dbReference type="HAMAP" id="MF_01235">
    <property type="entry name" value="ManNAc6P_epimer"/>
    <property type="match status" value="1"/>
</dbReference>
<dbReference type="InterPro" id="IPR013785">
    <property type="entry name" value="Aldolase_TIM"/>
</dbReference>
<dbReference type="InterPro" id="IPR007260">
    <property type="entry name" value="NanE"/>
</dbReference>
<dbReference type="InterPro" id="IPR011060">
    <property type="entry name" value="RibuloseP-bd_barrel"/>
</dbReference>
<dbReference type="NCBIfam" id="NF002231">
    <property type="entry name" value="PRK01130.1"/>
    <property type="match status" value="1"/>
</dbReference>
<dbReference type="PANTHER" id="PTHR36204">
    <property type="entry name" value="N-ACETYLMANNOSAMINE-6-PHOSPHATE 2-EPIMERASE-RELATED"/>
    <property type="match status" value="1"/>
</dbReference>
<dbReference type="PANTHER" id="PTHR36204:SF1">
    <property type="entry name" value="N-ACETYLMANNOSAMINE-6-PHOSPHATE 2-EPIMERASE-RELATED"/>
    <property type="match status" value="1"/>
</dbReference>
<dbReference type="Pfam" id="PF04131">
    <property type="entry name" value="NanE"/>
    <property type="match status" value="1"/>
</dbReference>
<dbReference type="SUPFAM" id="SSF51366">
    <property type="entry name" value="Ribulose-phoshate binding barrel"/>
    <property type="match status" value="1"/>
</dbReference>
<name>NANE_STRP7</name>
<sequence>MPQISKEALIEQIKDGIIVSCQALPHEPLYTEAGGVIPLLVKAAEQGGAVGIRANSVRDIKEIKEVTKLPIIGIIKRDYPPQEPFITATMKEVDELAELDIEVIALDCTKRERYDGLEIQEFIRQVKEKYPNQLLMADTSIFEEGLAAVEAGIDFVGTTLSGYTSYSPKVDGPDFELIKKLCDAGVDVIAEGKIHTPEQAKQILEYGVRGIVVGGAITRPKEITERFVASLK</sequence>
<feature type="chain" id="PRO_1000164995" description="Putative N-acetylmannosamine-6-phosphate 2-epimerase">
    <location>
        <begin position="1"/>
        <end position="232"/>
    </location>
</feature>
<organism>
    <name type="scientific">Streptococcus pneumoniae (strain 70585)</name>
    <dbReference type="NCBI Taxonomy" id="488221"/>
    <lineage>
        <taxon>Bacteria</taxon>
        <taxon>Bacillati</taxon>
        <taxon>Bacillota</taxon>
        <taxon>Bacilli</taxon>
        <taxon>Lactobacillales</taxon>
        <taxon>Streptococcaceae</taxon>
        <taxon>Streptococcus</taxon>
    </lineage>
</organism>
<evidence type="ECO:0000255" key="1">
    <source>
        <dbReference type="HAMAP-Rule" id="MF_01235"/>
    </source>
</evidence>
<comment type="function">
    <text evidence="1">Converts N-acetylmannosamine-6-phosphate (ManNAc-6-P) to N-acetylglucosamine-6-phosphate (GlcNAc-6-P).</text>
</comment>
<comment type="catalytic activity">
    <reaction evidence="1">
        <text>an N-acyl-D-glucosamine 6-phosphate = an N-acyl-D-mannosamine 6-phosphate</text>
        <dbReference type="Rhea" id="RHEA:23932"/>
        <dbReference type="ChEBI" id="CHEBI:57599"/>
        <dbReference type="ChEBI" id="CHEBI:57666"/>
        <dbReference type="EC" id="5.1.3.9"/>
    </reaction>
</comment>
<comment type="pathway">
    <text evidence="1">Amino-sugar metabolism; N-acetylneuraminate degradation; D-fructose 6-phosphate from N-acetylneuraminate: step 3/5.</text>
</comment>
<comment type="similarity">
    <text evidence="1">Belongs to the NanE family.</text>
</comment>
<protein>
    <recommendedName>
        <fullName evidence="1">Putative N-acetylmannosamine-6-phosphate 2-epimerase</fullName>
        <ecNumber evidence="1">5.1.3.9</ecNumber>
    </recommendedName>
    <alternativeName>
        <fullName evidence="1">ManNAc-6-P epimerase</fullName>
    </alternativeName>
</protein>
<reference key="1">
    <citation type="journal article" date="2010" name="Genome Biol.">
        <title>Structure and dynamics of the pan-genome of Streptococcus pneumoniae and closely related species.</title>
        <authorList>
            <person name="Donati C."/>
            <person name="Hiller N.L."/>
            <person name="Tettelin H."/>
            <person name="Muzzi A."/>
            <person name="Croucher N.J."/>
            <person name="Angiuoli S.V."/>
            <person name="Oggioni M."/>
            <person name="Dunning Hotopp J.C."/>
            <person name="Hu F.Z."/>
            <person name="Riley D.R."/>
            <person name="Covacci A."/>
            <person name="Mitchell T.J."/>
            <person name="Bentley S.D."/>
            <person name="Kilian M."/>
            <person name="Ehrlich G.D."/>
            <person name="Rappuoli R."/>
            <person name="Moxon E.R."/>
            <person name="Masignani V."/>
        </authorList>
    </citation>
    <scope>NUCLEOTIDE SEQUENCE [LARGE SCALE GENOMIC DNA]</scope>
    <source>
        <strain>70585</strain>
    </source>
</reference>